<reference key="1">
    <citation type="journal article" date="2010" name="Appl. Environ. Microbiol.">
        <title>Conserved symbiotic plasmid DNA sequences in the multireplicon pangenomic structure of Rhizobium etli.</title>
        <authorList>
            <person name="Gonzalez V."/>
            <person name="Acosta J.L."/>
            <person name="Santamaria R.I."/>
            <person name="Bustos P."/>
            <person name="Fernandez J.L."/>
            <person name="Hernandez Gonzalez I.L."/>
            <person name="Diaz R."/>
            <person name="Flores M."/>
            <person name="Palacios R."/>
            <person name="Mora J."/>
            <person name="Davila G."/>
        </authorList>
    </citation>
    <scope>NUCLEOTIDE SEQUENCE [LARGE SCALE GENOMIC DNA]</scope>
    <source>
        <strain>CIAT 652</strain>
    </source>
</reference>
<organism>
    <name type="scientific">Rhizobium etli (strain CIAT 652)</name>
    <dbReference type="NCBI Taxonomy" id="491916"/>
    <lineage>
        <taxon>Bacteria</taxon>
        <taxon>Pseudomonadati</taxon>
        <taxon>Pseudomonadota</taxon>
        <taxon>Alphaproteobacteria</taxon>
        <taxon>Hyphomicrobiales</taxon>
        <taxon>Rhizobiaceae</taxon>
        <taxon>Rhizobium/Agrobacterium group</taxon>
        <taxon>Rhizobium</taxon>
    </lineage>
</organism>
<protein>
    <recommendedName>
        <fullName evidence="1">Endoribonuclease YbeY</fullName>
        <ecNumber evidence="1">3.1.-.-</ecNumber>
    </recommendedName>
</protein>
<gene>
    <name evidence="1" type="primary">ybeY</name>
    <name type="ordered locus">RHECIAT_CH0000414</name>
</gene>
<feature type="chain" id="PRO_1000089199" description="Endoribonuclease YbeY">
    <location>
        <begin position="1"/>
        <end position="171"/>
    </location>
</feature>
<feature type="binding site" evidence="1">
    <location>
        <position position="126"/>
    </location>
    <ligand>
        <name>Zn(2+)</name>
        <dbReference type="ChEBI" id="CHEBI:29105"/>
        <note>catalytic</note>
    </ligand>
</feature>
<feature type="binding site" evidence="1">
    <location>
        <position position="130"/>
    </location>
    <ligand>
        <name>Zn(2+)</name>
        <dbReference type="ChEBI" id="CHEBI:29105"/>
        <note>catalytic</note>
    </ligand>
</feature>
<feature type="binding site" evidence="1">
    <location>
        <position position="136"/>
    </location>
    <ligand>
        <name>Zn(2+)</name>
        <dbReference type="ChEBI" id="CHEBI:29105"/>
        <note>catalytic</note>
    </ligand>
</feature>
<sequence>MAELDIQISIENIGWPEEETLLAFCGRVLGAAAVYLRDSEKQPFPTMPPEVSLVFTDDASIQDINAEWRGKDKATNVLSFPAFPVQPGKMPGPMLGDIIIARETVEREAHELEKSFDDHLTHLLVHGFLHLLGYDHMNSAEAEIMEGLETRILAQLGLSDPYEGQDLKMEP</sequence>
<name>YBEY_RHIE6</name>
<accession>B3PZB4</accession>
<comment type="function">
    <text evidence="1">Single strand-specific metallo-endoribonuclease involved in late-stage 70S ribosome quality control and in maturation of the 3' terminus of the 16S rRNA.</text>
</comment>
<comment type="cofactor">
    <cofactor evidence="1">
        <name>Zn(2+)</name>
        <dbReference type="ChEBI" id="CHEBI:29105"/>
    </cofactor>
    <text evidence="1">Binds 1 zinc ion.</text>
</comment>
<comment type="subcellular location">
    <subcellularLocation>
        <location evidence="1">Cytoplasm</location>
    </subcellularLocation>
</comment>
<comment type="similarity">
    <text evidence="1">Belongs to the endoribonuclease YbeY family.</text>
</comment>
<evidence type="ECO:0000255" key="1">
    <source>
        <dbReference type="HAMAP-Rule" id="MF_00009"/>
    </source>
</evidence>
<proteinExistence type="inferred from homology"/>
<keyword id="KW-0963">Cytoplasm</keyword>
<keyword id="KW-0255">Endonuclease</keyword>
<keyword id="KW-0378">Hydrolase</keyword>
<keyword id="KW-0479">Metal-binding</keyword>
<keyword id="KW-0540">Nuclease</keyword>
<keyword id="KW-0690">Ribosome biogenesis</keyword>
<keyword id="KW-0698">rRNA processing</keyword>
<keyword id="KW-0862">Zinc</keyword>
<dbReference type="EC" id="3.1.-.-" evidence="1"/>
<dbReference type="EMBL" id="CP001074">
    <property type="protein sequence ID" value="ACE89408.1"/>
    <property type="molecule type" value="Genomic_DNA"/>
</dbReference>
<dbReference type="SMR" id="B3PZB4"/>
<dbReference type="KEGG" id="rec:RHECIAT_CH0000414"/>
<dbReference type="eggNOG" id="COG0319">
    <property type="taxonomic scope" value="Bacteria"/>
</dbReference>
<dbReference type="HOGENOM" id="CLU_106710_0_0_5"/>
<dbReference type="Proteomes" id="UP000008817">
    <property type="component" value="Chromosome"/>
</dbReference>
<dbReference type="GO" id="GO:0005737">
    <property type="term" value="C:cytoplasm"/>
    <property type="evidence" value="ECO:0007669"/>
    <property type="project" value="UniProtKB-SubCell"/>
</dbReference>
<dbReference type="GO" id="GO:0004222">
    <property type="term" value="F:metalloendopeptidase activity"/>
    <property type="evidence" value="ECO:0007669"/>
    <property type="project" value="InterPro"/>
</dbReference>
<dbReference type="GO" id="GO:0004521">
    <property type="term" value="F:RNA endonuclease activity"/>
    <property type="evidence" value="ECO:0007669"/>
    <property type="project" value="UniProtKB-UniRule"/>
</dbReference>
<dbReference type="GO" id="GO:0008270">
    <property type="term" value="F:zinc ion binding"/>
    <property type="evidence" value="ECO:0007669"/>
    <property type="project" value="UniProtKB-UniRule"/>
</dbReference>
<dbReference type="GO" id="GO:0006364">
    <property type="term" value="P:rRNA processing"/>
    <property type="evidence" value="ECO:0007669"/>
    <property type="project" value="UniProtKB-UniRule"/>
</dbReference>
<dbReference type="Gene3D" id="3.40.390.30">
    <property type="entry name" value="Metalloproteases ('zincins'), catalytic domain"/>
    <property type="match status" value="1"/>
</dbReference>
<dbReference type="HAMAP" id="MF_00009">
    <property type="entry name" value="Endoribonucl_YbeY"/>
    <property type="match status" value="1"/>
</dbReference>
<dbReference type="InterPro" id="IPR023091">
    <property type="entry name" value="MetalPrtase_cat_dom_sf_prd"/>
</dbReference>
<dbReference type="InterPro" id="IPR002036">
    <property type="entry name" value="YbeY"/>
</dbReference>
<dbReference type="InterPro" id="IPR020549">
    <property type="entry name" value="YbeY_CS"/>
</dbReference>
<dbReference type="NCBIfam" id="TIGR00043">
    <property type="entry name" value="rRNA maturation RNase YbeY"/>
    <property type="match status" value="1"/>
</dbReference>
<dbReference type="PANTHER" id="PTHR46986">
    <property type="entry name" value="ENDORIBONUCLEASE YBEY, CHLOROPLASTIC"/>
    <property type="match status" value="1"/>
</dbReference>
<dbReference type="PANTHER" id="PTHR46986:SF1">
    <property type="entry name" value="ENDORIBONUCLEASE YBEY, CHLOROPLASTIC"/>
    <property type="match status" value="1"/>
</dbReference>
<dbReference type="Pfam" id="PF02130">
    <property type="entry name" value="YbeY"/>
    <property type="match status" value="1"/>
</dbReference>
<dbReference type="SUPFAM" id="SSF55486">
    <property type="entry name" value="Metalloproteases ('zincins'), catalytic domain"/>
    <property type="match status" value="1"/>
</dbReference>
<dbReference type="PROSITE" id="PS01306">
    <property type="entry name" value="UPF0054"/>
    <property type="match status" value="1"/>
</dbReference>